<reference key="1">
    <citation type="submission" date="1998-02" db="EMBL/GenBank/DDBJ databases">
        <title>Molecular cloning of the arginine biosynthetic genes from Corynebacterium glutamicum.</title>
        <authorList>
            <person name="Park M.Y."/>
            <person name="Chun J.Y."/>
            <person name="Ko S.-Y."/>
            <person name="Lee M.-S."/>
        </authorList>
    </citation>
    <scope>NUCLEOTIDE SEQUENCE [GENOMIC DNA]</scope>
    <source>
        <strain>ATCC 13059 / LMG 3658 / NCIB 10332 / AS019 / 613</strain>
    </source>
</reference>
<reference key="2">
    <citation type="submission" date="1997-10" db="EMBL/GenBank/DDBJ databases">
        <title>Molecular cloning of the argG gene from Corynebacterium glutamicum.</title>
        <authorList>
            <person name="Ko S.-Y."/>
            <person name="Chun J.Y."/>
            <person name="Jung S.I."/>
            <person name="Lee M.-S."/>
        </authorList>
    </citation>
    <scope>NUCLEOTIDE SEQUENCE [GENOMIC DNA]</scope>
    <source>
        <strain>ATCC 13059 / LMG 3658 / NCIB 10332 / AS019 / 613</strain>
    </source>
</reference>
<reference key="3">
    <citation type="journal article" date="2003" name="Appl. Microbiol. Biotechnol.">
        <title>The Corynebacterium glutamicum genome: features and impacts on biotechnological processes.</title>
        <authorList>
            <person name="Ikeda M."/>
            <person name="Nakagawa S."/>
        </authorList>
    </citation>
    <scope>NUCLEOTIDE SEQUENCE [LARGE SCALE GENOMIC DNA]</scope>
    <source>
        <strain>ATCC 13032 / DSM 20300 / JCM 1318 / BCRC 11384 / CCUG 27702 / LMG 3730 / NBRC 12168 / NCIMB 10025 / NRRL B-2784 / 534</strain>
    </source>
</reference>
<reference key="4">
    <citation type="journal article" date="2003" name="J. Biotechnol.">
        <title>The complete Corynebacterium glutamicum ATCC 13032 genome sequence and its impact on the production of L-aspartate-derived amino acids and vitamins.</title>
        <authorList>
            <person name="Kalinowski J."/>
            <person name="Bathe B."/>
            <person name="Bartels D."/>
            <person name="Bischoff N."/>
            <person name="Bott M."/>
            <person name="Burkovski A."/>
            <person name="Dusch N."/>
            <person name="Eggeling L."/>
            <person name="Eikmanns B.J."/>
            <person name="Gaigalat L."/>
            <person name="Goesmann A."/>
            <person name="Hartmann M."/>
            <person name="Huthmacher K."/>
            <person name="Kraemer R."/>
            <person name="Linke B."/>
            <person name="McHardy A.C."/>
            <person name="Meyer F."/>
            <person name="Moeckel B."/>
            <person name="Pfefferle W."/>
            <person name="Puehler A."/>
            <person name="Rey D.A."/>
            <person name="Rueckert C."/>
            <person name="Rupp O."/>
            <person name="Sahm H."/>
            <person name="Wendisch V.F."/>
            <person name="Wiegraebe I."/>
            <person name="Tauch A."/>
        </authorList>
    </citation>
    <scope>NUCLEOTIDE SEQUENCE [LARGE SCALE GENOMIC DNA]</scope>
    <source>
        <strain>ATCC 13032 / DSM 20300 / JCM 1318 / BCRC 11384 / CCUG 27702 / LMG 3730 / NBRC 12168 / NCIMB 10025 / NRRL B-2784 / 534</strain>
    </source>
</reference>
<sequence length="401" mass="44135">MTNRIVLAYSGGLDTTVAIPYLKKMIDGEVIAVSLDLGQGGENMDNVRQRALDAGAAESIVVDAKDEFAEEYCLPTIKANGMYMKQYPLVSAISRPLIVKHLVEAGKQFNGTHVAHGCTGKGNDQVRFEVGFMDTDPNLEIIAPARDFAWTRDKAIAFAEENNVPIEQSVKSPFSIDQNVWGRAIETGYLEDLWNAPTKDIYAYTEDPALGNAPDEVIISFEGGKPVSIDGRPVSVLQAIEELNRRAGAQGVGRLDMVEDRLVGIKSREIYEAPGAIALIKAHEALEDVTIERELARYKRGVDARWAEEVYDGLWFGPLKRSLDAFIDSTQEHVTGDIRMVLHAGSITINGRRSSHSLYDFNLATYDTGDTFDQTLAKGFVQLHGLSSKIANKRDREAGNN</sequence>
<proteinExistence type="inferred from homology"/>
<organism>
    <name type="scientific">Corynebacterium glutamicum (strain ATCC 13032 / DSM 20300 / JCM 1318 / BCRC 11384 / CCUG 27702 / LMG 3730 / NBRC 12168 / NCIMB 10025 / NRRL B-2784 / 534)</name>
    <dbReference type="NCBI Taxonomy" id="196627"/>
    <lineage>
        <taxon>Bacteria</taxon>
        <taxon>Bacillati</taxon>
        <taxon>Actinomycetota</taxon>
        <taxon>Actinomycetes</taxon>
        <taxon>Mycobacteriales</taxon>
        <taxon>Corynebacteriaceae</taxon>
        <taxon>Corynebacterium</taxon>
    </lineage>
</organism>
<dbReference type="EC" id="6.3.4.5" evidence="1"/>
<dbReference type="EMBL" id="AF049897">
    <property type="protein sequence ID" value="AAC24818.1"/>
    <property type="molecule type" value="Genomic_DNA"/>
</dbReference>
<dbReference type="EMBL" id="AF030520">
    <property type="protein sequence ID" value="AAB86624.1"/>
    <property type="molecule type" value="Genomic_DNA"/>
</dbReference>
<dbReference type="EMBL" id="BA000036">
    <property type="protein sequence ID" value="BAB98793.1"/>
    <property type="molecule type" value="Genomic_DNA"/>
</dbReference>
<dbReference type="EMBL" id="BX927152">
    <property type="protein sequence ID" value="CAF21411.1"/>
    <property type="molecule type" value="Genomic_DNA"/>
</dbReference>
<dbReference type="RefSeq" id="NP_600619.1">
    <property type="nucleotide sequence ID" value="NC_003450.3"/>
</dbReference>
<dbReference type="RefSeq" id="WP_003858678.1">
    <property type="nucleotide sequence ID" value="NC_006958.1"/>
</dbReference>
<dbReference type="SMR" id="O85176"/>
<dbReference type="STRING" id="196627.cg1586"/>
<dbReference type="KEGG" id="cgb:cg1586"/>
<dbReference type="KEGG" id="cgl:Cgl1400"/>
<dbReference type="PATRIC" id="fig|196627.13.peg.1369"/>
<dbReference type="eggNOG" id="COG0137">
    <property type="taxonomic scope" value="Bacteria"/>
</dbReference>
<dbReference type="HOGENOM" id="CLU_032784_4_2_11"/>
<dbReference type="OrthoDB" id="9801641at2"/>
<dbReference type="BioCyc" id="CORYNE:G18NG-10979-MONOMER"/>
<dbReference type="UniPathway" id="UPA00068">
    <property type="reaction ID" value="UER00113"/>
</dbReference>
<dbReference type="Proteomes" id="UP000000582">
    <property type="component" value="Chromosome"/>
</dbReference>
<dbReference type="Proteomes" id="UP000001009">
    <property type="component" value="Chromosome"/>
</dbReference>
<dbReference type="GO" id="GO:0005737">
    <property type="term" value="C:cytoplasm"/>
    <property type="evidence" value="ECO:0007669"/>
    <property type="project" value="UniProtKB-SubCell"/>
</dbReference>
<dbReference type="GO" id="GO:0004055">
    <property type="term" value="F:argininosuccinate synthase activity"/>
    <property type="evidence" value="ECO:0007669"/>
    <property type="project" value="UniProtKB-UniRule"/>
</dbReference>
<dbReference type="GO" id="GO:0005524">
    <property type="term" value="F:ATP binding"/>
    <property type="evidence" value="ECO:0007669"/>
    <property type="project" value="UniProtKB-UniRule"/>
</dbReference>
<dbReference type="GO" id="GO:0000053">
    <property type="term" value="P:argininosuccinate metabolic process"/>
    <property type="evidence" value="ECO:0007669"/>
    <property type="project" value="TreeGrafter"/>
</dbReference>
<dbReference type="GO" id="GO:0006526">
    <property type="term" value="P:L-arginine biosynthetic process"/>
    <property type="evidence" value="ECO:0007669"/>
    <property type="project" value="UniProtKB-UniRule"/>
</dbReference>
<dbReference type="GO" id="GO:0000050">
    <property type="term" value="P:urea cycle"/>
    <property type="evidence" value="ECO:0007669"/>
    <property type="project" value="TreeGrafter"/>
</dbReference>
<dbReference type="CDD" id="cd01999">
    <property type="entry name" value="ASS"/>
    <property type="match status" value="1"/>
</dbReference>
<dbReference type="FunFam" id="3.40.50.620:FF:000038">
    <property type="entry name" value="Argininosuccinate synthase"/>
    <property type="match status" value="1"/>
</dbReference>
<dbReference type="FunFam" id="3.90.1260.10:FF:000007">
    <property type="entry name" value="Argininosuccinate synthase"/>
    <property type="match status" value="1"/>
</dbReference>
<dbReference type="Gene3D" id="3.90.1260.10">
    <property type="entry name" value="Argininosuccinate synthetase, chain A, domain 2"/>
    <property type="match status" value="1"/>
</dbReference>
<dbReference type="Gene3D" id="3.40.50.620">
    <property type="entry name" value="HUPs"/>
    <property type="match status" value="1"/>
</dbReference>
<dbReference type="Gene3D" id="1.20.5.470">
    <property type="entry name" value="Single helix bin"/>
    <property type="match status" value="1"/>
</dbReference>
<dbReference type="HAMAP" id="MF_00005">
    <property type="entry name" value="Arg_succ_synth_type1"/>
    <property type="match status" value="1"/>
</dbReference>
<dbReference type="InterPro" id="IPR048268">
    <property type="entry name" value="Arginosuc_syn_C"/>
</dbReference>
<dbReference type="InterPro" id="IPR048267">
    <property type="entry name" value="Arginosuc_syn_N"/>
</dbReference>
<dbReference type="InterPro" id="IPR001518">
    <property type="entry name" value="Arginosuc_synth"/>
</dbReference>
<dbReference type="InterPro" id="IPR018223">
    <property type="entry name" value="Arginosuc_synth_CS"/>
</dbReference>
<dbReference type="InterPro" id="IPR023434">
    <property type="entry name" value="Arginosuc_synth_type_1_subfam"/>
</dbReference>
<dbReference type="InterPro" id="IPR024074">
    <property type="entry name" value="AS_cat/multimer_dom_body"/>
</dbReference>
<dbReference type="InterPro" id="IPR014729">
    <property type="entry name" value="Rossmann-like_a/b/a_fold"/>
</dbReference>
<dbReference type="NCBIfam" id="TIGR00032">
    <property type="entry name" value="argG"/>
    <property type="match status" value="1"/>
</dbReference>
<dbReference type="NCBIfam" id="NF001770">
    <property type="entry name" value="PRK00509.1"/>
    <property type="match status" value="1"/>
</dbReference>
<dbReference type="PANTHER" id="PTHR11587">
    <property type="entry name" value="ARGININOSUCCINATE SYNTHASE"/>
    <property type="match status" value="1"/>
</dbReference>
<dbReference type="PANTHER" id="PTHR11587:SF2">
    <property type="entry name" value="ARGININOSUCCINATE SYNTHASE"/>
    <property type="match status" value="1"/>
</dbReference>
<dbReference type="Pfam" id="PF20979">
    <property type="entry name" value="Arginosuc_syn_C"/>
    <property type="match status" value="1"/>
</dbReference>
<dbReference type="Pfam" id="PF00764">
    <property type="entry name" value="Arginosuc_synth"/>
    <property type="match status" value="1"/>
</dbReference>
<dbReference type="SUPFAM" id="SSF52402">
    <property type="entry name" value="Adenine nucleotide alpha hydrolases-like"/>
    <property type="match status" value="1"/>
</dbReference>
<dbReference type="SUPFAM" id="SSF69864">
    <property type="entry name" value="Argininosuccinate synthetase, C-terminal domain"/>
    <property type="match status" value="1"/>
</dbReference>
<dbReference type="PROSITE" id="PS00564">
    <property type="entry name" value="ARGININOSUCCIN_SYN_1"/>
    <property type="match status" value="1"/>
</dbReference>
<dbReference type="PROSITE" id="PS00565">
    <property type="entry name" value="ARGININOSUCCIN_SYN_2"/>
    <property type="match status" value="1"/>
</dbReference>
<keyword id="KW-0028">Amino-acid biosynthesis</keyword>
<keyword id="KW-0055">Arginine biosynthesis</keyword>
<keyword id="KW-0067">ATP-binding</keyword>
<keyword id="KW-0963">Cytoplasm</keyword>
<keyword id="KW-0436">Ligase</keyword>
<keyword id="KW-0547">Nucleotide-binding</keyword>
<keyword id="KW-1185">Reference proteome</keyword>
<gene>
    <name evidence="1" type="primary">argG</name>
    <name type="ordered locus">Cgl1400</name>
    <name type="ordered locus">cg1586</name>
</gene>
<name>ASSY_CORGL</name>
<protein>
    <recommendedName>
        <fullName evidence="1">Argininosuccinate synthase</fullName>
        <ecNumber evidence="1">6.3.4.5</ecNumber>
    </recommendedName>
    <alternativeName>
        <fullName evidence="1">Citrulline--aspartate ligase</fullName>
    </alternativeName>
</protein>
<comment type="catalytic activity">
    <reaction evidence="1">
        <text>L-citrulline + L-aspartate + ATP = 2-(N(omega)-L-arginino)succinate + AMP + diphosphate + H(+)</text>
        <dbReference type="Rhea" id="RHEA:10932"/>
        <dbReference type="ChEBI" id="CHEBI:15378"/>
        <dbReference type="ChEBI" id="CHEBI:29991"/>
        <dbReference type="ChEBI" id="CHEBI:30616"/>
        <dbReference type="ChEBI" id="CHEBI:33019"/>
        <dbReference type="ChEBI" id="CHEBI:57472"/>
        <dbReference type="ChEBI" id="CHEBI:57743"/>
        <dbReference type="ChEBI" id="CHEBI:456215"/>
        <dbReference type="EC" id="6.3.4.5"/>
    </reaction>
</comment>
<comment type="pathway">
    <text evidence="1">Amino-acid biosynthesis; L-arginine biosynthesis; L-arginine from L-ornithine and carbamoyl phosphate: step 2/3.</text>
</comment>
<comment type="subunit">
    <text evidence="1">Homotetramer.</text>
</comment>
<comment type="subcellular location">
    <subcellularLocation>
        <location evidence="1">Cytoplasm</location>
    </subcellularLocation>
</comment>
<comment type="similarity">
    <text evidence="1">Belongs to the argininosuccinate synthase family. Type 1 subfamily.</text>
</comment>
<feature type="chain" id="PRO_0000148590" description="Argininosuccinate synthase">
    <location>
        <begin position="1"/>
        <end position="401"/>
    </location>
</feature>
<feature type="binding site" evidence="1">
    <location>
        <begin position="8"/>
        <end position="16"/>
    </location>
    <ligand>
        <name>ATP</name>
        <dbReference type="ChEBI" id="CHEBI:30616"/>
    </ligand>
</feature>
<feature type="binding site" evidence="1">
    <location>
        <position position="87"/>
    </location>
    <ligand>
        <name>L-citrulline</name>
        <dbReference type="ChEBI" id="CHEBI:57743"/>
    </ligand>
</feature>
<feature type="binding site" evidence="1">
    <location>
        <position position="117"/>
    </location>
    <ligand>
        <name>ATP</name>
        <dbReference type="ChEBI" id="CHEBI:30616"/>
    </ligand>
</feature>
<feature type="binding site" evidence="1">
    <location>
        <position position="119"/>
    </location>
    <ligand>
        <name>L-aspartate</name>
        <dbReference type="ChEBI" id="CHEBI:29991"/>
    </ligand>
</feature>
<feature type="binding site" evidence="1">
    <location>
        <position position="123"/>
    </location>
    <ligand>
        <name>L-aspartate</name>
        <dbReference type="ChEBI" id="CHEBI:29991"/>
    </ligand>
</feature>
<feature type="binding site" evidence="1">
    <location>
        <position position="123"/>
    </location>
    <ligand>
        <name>L-citrulline</name>
        <dbReference type="ChEBI" id="CHEBI:57743"/>
    </ligand>
</feature>
<feature type="binding site" evidence="1">
    <location>
        <position position="124"/>
    </location>
    <ligand>
        <name>L-aspartate</name>
        <dbReference type="ChEBI" id="CHEBI:29991"/>
    </ligand>
</feature>
<feature type="binding site" evidence="1">
    <location>
        <position position="127"/>
    </location>
    <ligand>
        <name>L-citrulline</name>
        <dbReference type="ChEBI" id="CHEBI:57743"/>
    </ligand>
</feature>
<feature type="binding site" evidence="1">
    <location>
        <position position="175"/>
    </location>
    <ligand>
        <name>L-citrulline</name>
        <dbReference type="ChEBI" id="CHEBI:57743"/>
    </ligand>
</feature>
<feature type="binding site" evidence="1">
    <location>
        <position position="259"/>
    </location>
    <ligand>
        <name>L-citrulline</name>
        <dbReference type="ChEBI" id="CHEBI:57743"/>
    </ligand>
</feature>
<feature type="binding site" evidence="1">
    <location>
        <position position="271"/>
    </location>
    <ligand>
        <name>L-citrulline</name>
        <dbReference type="ChEBI" id="CHEBI:57743"/>
    </ligand>
</feature>
<feature type="sequence conflict" description="In Ref. 1; AAC24818." evidence="2" ref="1">
    <original>R</original>
    <variation>G</variation>
    <location>
        <position position="127"/>
    </location>
</feature>
<feature type="sequence conflict" description="In Ref. 1; AAC24818 and 2; AAB86624." evidence="2" ref="1 2">
    <original>A</original>
    <variation>R</variation>
    <location>
        <position position="304"/>
    </location>
</feature>
<accession>O85176</accession>
<accession>O31144</accession>
<evidence type="ECO:0000255" key="1">
    <source>
        <dbReference type="HAMAP-Rule" id="MF_00005"/>
    </source>
</evidence>
<evidence type="ECO:0000305" key="2"/>